<comment type="function">
    <text evidence="1">Binds 16S rRNA, required for the assembly of 30S particles and may also be responsible for determining the conformation of the 16S rRNA at the A site.</text>
</comment>
<comment type="cofactor">
    <cofactor evidence="1">
        <name>Zn(2+)</name>
        <dbReference type="ChEBI" id="CHEBI:29105"/>
    </cofactor>
    <text evidence="1">Binds 1 zinc ion per subunit.</text>
</comment>
<comment type="subunit">
    <text evidence="1">Part of the 30S ribosomal subunit. Contacts proteins S3 and S10.</text>
</comment>
<comment type="similarity">
    <text evidence="1">Belongs to the universal ribosomal protein uS14 family. Zinc-binding uS14 subfamily.</text>
</comment>
<keyword id="KW-0479">Metal-binding</keyword>
<keyword id="KW-0687">Ribonucleoprotein</keyword>
<keyword id="KW-0689">Ribosomal protein</keyword>
<keyword id="KW-0694">RNA-binding</keyword>
<keyword id="KW-0699">rRNA-binding</keyword>
<keyword id="KW-0862">Zinc</keyword>
<reference key="1">
    <citation type="journal article" date="2008" name="PLoS ONE">
        <title>Genome sequence of the saprophyte Leptospira biflexa provides insights into the evolution of Leptospira and the pathogenesis of leptospirosis.</title>
        <authorList>
            <person name="Picardeau M."/>
            <person name="Bulach D.M."/>
            <person name="Bouchier C."/>
            <person name="Zuerner R.L."/>
            <person name="Zidane N."/>
            <person name="Wilson P.J."/>
            <person name="Creno S."/>
            <person name="Kuczek E.S."/>
            <person name="Bommezzadri S."/>
            <person name="Davis J.C."/>
            <person name="McGrath A."/>
            <person name="Johnson M.J."/>
            <person name="Boursaux-Eude C."/>
            <person name="Seemann T."/>
            <person name="Rouy Z."/>
            <person name="Coppel R.L."/>
            <person name="Rood J.I."/>
            <person name="Lajus A."/>
            <person name="Davies J.K."/>
            <person name="Medigue C."/>
            <person name="Adler B."/>
        </authorList>
    </citation>
    <scope>NUCLEOTIDE SEQUENCE [LARGE SCALE GENOMIC DNA]</scope>
    <source>
        <strain>Patoc 1 / Ames</strain>
    </source>
</reference>
<proteinExistence type="inferred from homology"/>
<name>RS14Z_LEPBA</name>
<protein>
    <recommendedName>
        <fullName evidence="1">Small ribosomal subunit protein uS14</fullName>
    </recommendedName>
    <alternativeName>
        <fullName evidence="2">30S ribosomal protein S14 type Z</fullName>
    </alternativeName>
</protein>
<feature type="chain" id="PRO_1000143912" description="Small ribosomal subunit protein uS14">
    <location>
        <begin position="1"/>
        <end position="61"/>
    </location>
</feature>
<feature type="binding site" evidence="1">
    <location>
        <position position="24"/>
    </location>
    <ligand>
        <name>Zn(2+)</name>
        <dbReference type="ChEBI" id="CHEBI:29105"/>
    </ligand>
</feature>
<feature type="binding site" evidence="1">
    <location>
        <position position="27"/>
    </location>
    <ligand>
        <name>Zn(2+)</name>
        <dbReference type="ChEBI" id="CHEBI:29105"/>
    </ligand>
</feature>
<feature type="binding site" evidence="1">
    <location>
        <position position="40"/>
    </location>
    <ligand>
        <name>Zn(2+)</name>
        <dbReference type="ChEBI" id="CHEBI:29105"/>
    </ligand>
</feature>
<feature type="binding site" evidence="1">
    <location>
        <position position="43"/>
    </location>
    <ligand>
        <name>Zn(2+)</name>
        <dbReference type="ChEBI" id="CHEBI:29105"/>
    </ligand>
</feature>
<organism>
    <name type="scientific">Leptospira biflexa serovar Patoc (strain Patoc 1 / Ames)</name>
    <dbReference type="NCBI Taxonomy" id="355278"/>
    <lineage>
        <taxon>Bacteria</taxon>
        <taxon>Pseudomonadati</taxon>
        <taxon>Spirochaetota</taxon>
        <taxon>Spirochaetia</taxon>
        <taxon>Leptospirales</taxon>
        <taxon>Leptospiraceae</taxon>
        <taxon>Leptospira</taxon>
    </lineage>
</organism>
<sequence length="61" mass="7329">MAKKSMMERHAKEQKFKVREYNRCPLCGRSRAYLRRFDMCRLCFRDLASKAQIPGVKKSSW</sequence>
<dbReference type="EMBL" id="CP000777">
    <property type="protein sequence ID" value="ABZ94404.1"/>
    <property type="molecule type" value="Genomic_DNA"/>
</dbReference>
<dbReference type="SMR" id="B0SA34"/>
<dbReference type="KEGG" id="lbf:LBF_1900"/>
<dbReference type="HOGENOM" id="CLU_139869_3_0_12"/>
<dbReference type="GO" id="GO:0005737">
    <property type="term" value="C:cytoplasm"/>
    <property type="evidence" value="ECO:0007669"/>
    <property type="project" value="UniProtKB-ARBA"/>
</dbReference>
<dbReference type="GO" id="GO:0015935">
    <property type="term" value="C:small ribosomal subunit"/>
    <property type="evidence" value="ECO:0007669"/>
    <property type="project" value="TreeGrafter"/>
</dbReference>
<dbReference type="GO" id="GO:0019843">
    <property type="term" value="F:rRNA binding"/>
    <property type="evidence" value="ECO:0007669"/>
    <property type="project" value="UniProtKB-UniRule"/>
</dbReference>
<dbReference type="GO" id="GO:0003735">
    <property type="term" value="F:structural constituent of ribosome"/>
    <property type="evidence" value="ECO:0007669"/>
    <property type="project" value="InterPro"/>
</dbReference>
<dbReference type="GO" id="GO:0008270">
    <property type="term" value="F:zinc ion binding"/>
    <property type="evidence" value="ECO:0007669"/>
    <property type="project" value="UniProtKB-UniRule"/>
</dbReference>
<dbReference type="GO" id="GO:0006412">
    <property type="term" value="P:translation"/>
    <property type="evidence" value="ECO:0007669"/>
    <property type="project" value="UniProtKB-UniRule"/>
</dbReference>
<dbReference type="FunFam" id="4.10.830.10:FF:000001">
    <property type="entry name" value="30S ribosomal protein S14 type Z"/>
    <property type="match status" value="1"/>
</dbReference>
<dbReference type="Gene3D" id="4.10.830.10">
    <property type="entry name" value="30s Ribosomal Protein S14, Chain N"/>
    <property type="match status" value="1"/>
</dbReference>
<dbReference type="HAMAP" id="MF_01364_B">
    <property type="entry name" value="Ribosomal_uS14_2_B"/>
    <property type="match status" value="1"/>
</dbReference>
<dbReference type="InterPro" id="IPR001209">
    <property type="entry name" value="Ribosomal_uS14"/>
</dbReference>
<dbReference type="InterPro" id="IPR023053">
    <property type="entry name" value="Ribosomal_uS14_bact"/>
</dbReference>
<dbReference type="InterPro" id="IPR018271">
    <property type="entry name" value="Ribosomal_uS14_CS"/>
</dbReference>
<dbReference type="InterPro" id="IPR043140">
    <property type="entry name" value="Ribosomal_uS14_sf"/>
</dbReference>
<dbReference type="NCBIfam" id="NF005974">
    <property type="entry name" value="PRK08061.1"/>
    <property type="match status" value="1"/>
</dbReference>
<dbReference type="PANTHER" id="PTHR19836">
    <property type="entry name" value="30S RIBOSOMAL PROTEIN S14"/>
    <property type="match status" value="1"/>
</dbReference>
<dbReference type="PANTHER" id="PTHR19836:SF19">
    <property type="entry name" value="SMALL RIBOSOMAL SUBUNIT PROTEIN US14M"/>
    <property type="match status" value="1"/>
</dbReference>
<dbReference type="Pfam" id="PF00253">
    <property type="entry name" value="Ribosomal_S14"/>
    <property type="match status" value="1"/>
</dbReference>
<dbReference type="SUPFAM" id="SSF57716">
    <property type="entry name" value="Glucocorticoid receptor-like (DNA-binding domain)"/>
    <property type="match status" value="1"/>
</dbReference>
<dbReference type="PROSITE" id="PS00527">
    <property type="entry name" value="RIBOSOMAL_S14"/>
    <property type="match status" value="1"/>
</dbReference>
<accession>B0SA34</accession>
<gene>
    <name evidence="1" type="primary">rpsZ</name>
    <name evidence="1" type="synonym">rpsN</name>
    <name type="ordered locus">LBF_1900</name>
</gene>
<evidence type="ECO:0000255" key="1">
    <source>
        <dbReference type="HAMAP-Rule" id="MF_01364"/>
    </source>
</evidence>
<evidence type="ECO:0000305" key="2"/>